<organism>
    <name type="scientific">Coxiella burnetii (strain RSA 331 / Henzerling II)</name>
    <dbReference type="NCBI Taxonomy" id="360115"/>
    <lineage>
        <taxon>Bacteria</taxon>
        <taxon>Pseudomonadati</taxon>
        <taxon>Pseudomonadota</taxon>
        <taxon>Gammaproteobacteria</taxon>
        <taxon>Legionellales</taxon>
        <taxon>Coxiellaceae</taxon>
        <taxon>Coxiella</taxon>
    </lineage>
</organism>
<comment type="function">
    <text evidence="1">Methyltransferase required for the conversion of demethylmenaquinol (DMKH2) to menaquinol (MKH2) and the conversion of 2-polyprenyl-6-methoxy-1,4-benzoquinol (DDMQH2) to 2-polyprenyl-3-methyl-6-methoxy-1,4-benzoquinol (DMQH2).</text>
</comment>
<comment type="catalytic activity">
    <reaction evidence="1">
        <text>a 2-demethylmenaquinol + S-adenosyl-L-methionine = a menaquinol + S-adenosyl-L-homocysteine + H(+)</text>
        <dbReference type="Rhea" id="RHEA:42640"/>
        <dbReference type="Rhea" id="RHEA-COMP:9539"/>
        <dbReference type="Rhea" id="RHEA-COMP:9563"/>
        <dbReference type="ChEBI" id="CHEBI:15378"/>
        <dbReference type="ChEBI" id="CHEBI:18151"/>
        <dbReference type="ChEBI" id="CHEBI:55437"/>
        <dbReference type="ChEBI" id="CHEBI:57856"/>
        <dbReference type="ChEBI" id="CHEBI:59789"/>
        <dbReference type="EC" id="2.1.1.163"/>
    </reaction>
</comment>
<comment type="catalytic activity">
    <reaction evidence="1">
        <text>a 2-methoxy-6-(all-trans-polyprenyl)benzene-1,4-diol + S-adenosyl-L-methionine = a 5-methoxy-2-methyl-3-(all-trans-polyprenyl)benzene-1,4-diol + S-adenosyl-L-homocysteine + H(+)</text>
        <dbReference type="Rhea" id="RHEA:28286"/>
        <dbReference type="Rhea" id="RHEA-COMP:10858"/>
        <dbReference type="Rhea" id="RHEA-COMP:10859"/>
        <dbReference type="ChEBI" id="CHEBI:15378"/>
        <dbReference type="ChEBI" id="CHEBI:57856"/>
        <dbReference type="ChEBI" id="CHEBI:59789"/>
        <dbReference type="ChEBI" id="CHEBI:84166"/>
        <dbReference type="ChEBI" id="CHEBI:84167"/>
        <dbReference type="EC" id="2.1.1.201"/>
    </reaction>
</comment>
<comment type="pathway">
    <text evidence="1">Quinol/quinone metabolism; menaquinone biosynthesis; menaquinol from 1,4-dihydroxy-2-naphthoate: step 2/2.</text>
</comment>
<comment type="pathway">
    <text evidence="1">Cofactor biosynthesis; ubiquinone biosynthesis.</text>
</comment>
<comment type="similarity">
    <text evidence="1">Belongs to the class I-like SAM-binding methyltransferase superfamily. MenG/UbiE family.</text>
</comment>
<proteinExistence type="inferred from homology"/>
<dbReference type="EC" id="2.1.1.163" evidence="1"/>
<dbReference type="EC" id="2.1.1.201" evidence="1"/>
<dbReference type="EMBL" id="CP000890">
    <property type="protein sequence ID" value="ABX78978.1"/>
    <property type="molecule type" value="Genomic_DNA"/>
</dbReference>
<dbReference type="RefSeq" id="WP_012220032.1">
    <property type="nucleotide sequence ID" value="NC_010117.1"/>
</dbReference>
<dbReference type="SMR" id="A9N9F4"/>
<dbReference type="KEGG" id="cbs:COXBURSA331_A0067"/>
<dbReference type="HOGENOM" id="CLU_037990_0_0_6"/>
<dbReference type="UniPathway" id="UPA00079">
    <property type="reaction ID" value="UER00169"/>
</dbReference>
<dbReference type="UniPathway" id="UPA00232"/>
<dbReference type="GO" id="GO:0008425">
    <property type="term" value="F:2-methoxy-6-polyprenyl-1,4-benzoquinol methyltransferase activity"/>
    <property type="evidence" value="ECO:0007669"/>
    <property type="project" value="UniProtKB-UniRule"/>
</dbReference>
<dbReference type="GO" id="GO:0043770">
    <property type="term" value="F:demethylmenaquinone methyltransferase activity"/>
    <property type="evidence" value="ECO:0007669"/>
    <property type="project" value="UniProtKB-UniRule"/>
</dbReference>
<dbReference type="GO" id="GO:0009060">
    <property type="term" value="P:aerobic respiration"/>
    <property type="evidence" value="ECO:0007669"/>
    <property type="project" value="UniProtKB-UniRule"/>
</dbReference>
<dbReference type="GO" id="GO:0009234">
    <property type="term" value="P:menaquinone biosynthetic process"/>
    <property type="evidence" value="ECO:0007669"/>
    <property type="project" value="UniProtKB-UniRule"/>
</dbReference>
<dbReference type="GO" id="GO:0032259">
    <property type="term" value="P:methylation"/>
    <property type="evidence" value="ECO:0007669"/>
    <property type="project" value="UniProtKB-KW"/>
</dbReference>
<dbReference type="CDD" id="cd02440">
    <property type="entry name" value="AdoMet_MTases"/>
    <property type="match status" value="1"/>
</dbReference>
<dbReference type="FunFam" id="3.40.50.150:FF:000014">
    <property type="entry name" value="Ubiquinone/menaquinone biosynthesis C-methyltransferase UbiE"/>
    <property type="match status" value="1"/>
</dbReference>
<dbReference type="Gene3D" id="3.40.50.150">
    <property type="entry name" value="Vaccinia Virus protein VP39"/>
    <property type="match status" value="1"/>
</dbReference>
<dbReference type="HAMAP" id="MF_01813">
    <property type="entry name" value="MenG_UbiE_methyltr"/>
    <property type="match status" value="1"/>
</dbReference>
<dbReference type="InterPro" id="IPR029063">
    <property type="entry name" value="SAM-dependent_MTases_sf"/>
</dbReference>
<dbReference type="InterPro" id="IPR004033">
    <property type="entry name" value="UbiE/COQ5_MeTrFase"/>
</dbReference>
<dbReference type="InterPro" id="IPR023576">
    <property type="entry name" value="UbiE/COQ5_MeTrFase_CS"/>
</dbReference>
<dbReference type="NCBIfam" id="TIGR01934">
    <property type="entry name" value="MenG_MenH_UbiE"/>
    <property type="match status" value="1"/>
</dbReference>
<dbReference type="NCBIfam" id="NF001240">
    <property type="entry name" value="PRK00216.1-1"/>
    <property type="match status" value="1"/>
</dbReference>
<dbReference type="NCBIfam" id="NF001244">
    <property type="entry name" value="PRK00216.1-5"/>
    <property type="match status" value="1"/>
</dbReference>
<dbReference type="PANTHER" id="PTHR43591:SF24">
    <property type="entry name" value="2-METHOXY-6-POLYPRENYL-1,4-BENZOQUINOL METHYLASE, MITOCHONDRIAL"/>
    <property type="match status" value="1"/>
</dbReference>
<dbReference type="PANTHER" id="PTHR43591">
    <property type="entry name" value="METHYLTRANSFERASE"/>
    <property type="match status" value="1"/>
</dbReference>
<dbReference type="Pfam" id="PF01209">
    <property type="entry name" value="Ubie_methyltran"/>
    <property type="match status" value="1"/>
</dbReference>
<dbReference type="SUPFAM" id="SSF53335">
    <property type="entry name" value="S-adenosyl-L-methionine-dependent methyltransferases"/>
    <property type="match status" value="1"/>
</dbReference>
<dbReference type="PROSITE" id="PS51608">
    <property type="entry name" value="SAM_MT_UBIE"/>
    <property type="match status" value="1"/>
</dbReference>
<dbReference type="PROSITE" id="PS01183">
    <property type="entry name" value="UBIE_1"/>
    <property type="match status" value="1"/>
</dbReference>
<dbReference type="PROSITE" id="PS01184">
    <property type="entry name" value="UBIE_2"/>
    <property type="match status" value="1"/>
</dbReference>
<keyword id="KW-0474">Menaquinone biosynthesis</keyword>
<keyword id="KW-0489">Methyltransferase</keyword>
<keyword id="KW-0949">S-adenosyl-L-methionine</keyword>
<keyword id="KW-0808">Transferase</keyword>
<keyword id="KW-0831">Ubiquinone biosynthesis</keyword>
<accession>A9N9F4</accession>
<feature type="chain" id="PRO_1000088281" description="Ubiquinone/menaquinone biosynthesis C-methyltransferase UbiE">
    <location>
        <begin position="1"/>
        <end position="250"/>
    </location>
</feature>
<feature type="binding site" evidence="1">
    <location>
        <position position="73"/>
    </location>
    <ligand>
        <name>S-adenosyl-L-methionine</name>
        <dbReference type="ChEBI" id="CHEBI:59789"/>
    </ligand>
</feature>
<feature type="binding site" evidence="1">
    <location>
        <position position="94"/>
    </location>
    <ligand>
        <name>S-adenosyl-L-methionine</name>
        <dbReference type="ChEBI" id="CHEBI:59789"/>
    </ligand>
</feature>
<feature type="binding site" evidence="1">
    <location>
        <begin position="122"/>
        <end position="123"/>
    </location>
    <ligand>
        <name>S-adenosyl-L-methionine</name>
        <dbReference type="ChEBI" id="CHEBI:59789"/>
    </ligand>
</feature>
<gene>
    <name evidence="1" type="primary">ubiE</name>
    <name type="ordered locus">COXBURSA331_A0067</name>
</gene>
<sequence>MNETEKSTHFGYQTVPTDQKTDKVKHVFESVAAKYDLMNDLMSLGIHRCWKDFAITQCRLRTGQRILDLAGGTGDLAKRISPLVGDEGEVVIADINAAMLNVGRRRLLDQGIFRNIQFIQADAEKLPFPNNFFDRIVIGFGLRNVTNQLAALQSMHRVIKPGGFVVILEFSKPTLAPLKAVYDAYSFQLLPRLGKLVAKDEESYRYLVESIRMHPDQEALLSKMTDAGFEDCDYHNLSGGIVAVHRGYKF</sequence>
<protein>
    <recommendedName>
        <fullName evidence="1">Ubiquinone/menaquinone biosynthesis C-methyltransferase UbiE</fullName>
        <ecNumber evidence="1">2.1.1.163</ecNumber>
        <ecNumber evidence="1">2.1.1.201</ecNumber>
    </recommendedName>
    <alternativeName>
        <fullName evidence="1">2-methoxy-6-polyprenyl-1,4-benzoquinol methylase</fullName>
    </alternativeName>
    <alternativeName>
        <fullName evidence="1">Demethylmenaquinone methyltransferase</fullName>
    </alternativeName>
</protein>
<evidence type="ECO:0000255" key="1">
    <source>
        <dbReference type="HAMAP-Rule" id="MF_01813"/>
    </source>
</evidence>
<name>UBIE_COXBR</name>
<reference key="1">
    <citation type="submission" date="2007-11" db="EMBL/GenBank/DDBJ databases">
        <title>Genome sequencing of phylogenetically and phenotypically diverse Coxiella burnetii isolates.</title>
        <authorList>
            <person name="Seshadri R."/>
            <person name="Samuel J.E."/>
        </authorList>
    </citation>
    <scope>NUCLEOTIDE SEQUENCE [LARGE SCALE GENOMIC DNA]</scope>
    <source>
        <strain>RSA 331 / Henzerling II</strain>
    </source>
</reference>